<comment type="function">
    <text evidence="1">A probable ATP-dependent DNA helicase implicated in DNA repair and the maintenance of genomic stability. Acts as an anti-recombinase to counteract toxic recombination and limit crossover during meiosis. Regulates meiotic recombination and crossover homeostasis by physically dissociating strand invasion events and thereby promotes noncrossover repair by meiotic synthesis dependent strand annealing (SDSA) as well as disassembly of D loop recombination intermediates.</text>
</comment>
<comment type="catalytic activity">
    <reaction evidence="1">
        <text>ATP + H2O = ADP + phosphate + H(+)</text>
        <dbReference type="Rhea" id="RHEA:13065"/>
        <dbReference type="ChEBI" id="CHEBI:15377"/>
        <dbReference type="ChEBI" id="CHEBI:15378"/>
        <dbReference type="ChEBI" id="CHEBI:30616"/>
        <dbReference type="ChEBI" id="CHEBI:43474"/>
        <dbReference type="ChEBI" id="CHEBI:456216"/>
    </reaction>
</comment>
<comment type="subcellular location">
    <subcellularLocation>
        <location evidence="1">Nucleus</location>
    </subcellularLocation>
</comment>
<comment type="similarity">
    <text evidence="1">Belongs to the helicase family. RAD3/XPD subfamily.</text>
</comment>
<feature type="chain" id="PRO_0000370617" description="Regulator of telomere elongation helicase 1 homolog">
    <location>
        <begin position="1"/>
        <end position="1010"/>
    </location>
</feature>
<feature type="domain" description="Helicase ATP-binding" evidence="1">
    <location>
        <begin position="7"/>
        <end position="333"/>
    </location>
</feature>
<feature type="region of interest" description="Disordered" evidence="2">
    <location>
        <begin position="912"/>
        <end position="931"/>
    </location>
</feature>
<feature type="short sequence motif" description="DEAH box">
    <location>
        <begin position="263"/>
        <end position="266"/>
    </location>
</feature>
<feature type="compositionally biased region" description="Basic and acidic residues" evidence="2">
    <location>
        <begin position="918"/>
        <end position="931"/>
    </location>
</feature>
<feature type="binding site" evidence="1">
    <location>
        <begin position="42"/>
        <end position="49"/>
    </location>
    <ligand>
        <name>ATP</name>
        <dbReference type="ChEBI" id="CHEBI:30616"/>
    </ligand>
</feature>
<feature type="binding site" evidence="1">
    <location>
        <position position="157"/>
    </location>
    <ligand>
        <name>[4Fe-4S] cluster</name>
        <dbReference type="ChEBI" id="CHEBI:49883"/>
    </ligand>
</feature>
<feature type="binding site" evidence="1">
    <location>
        <position position="175"/>
    </location>
    <ligand>
        <name>[4Fe-4S] cluster</name>
        <dbReference type="ChEBI" id="CHEBI:49883"/>
    </ligand>
</feature>
<feature type="binding site" evidence="1">
    <location>
        <position position="184"/>
    </location>
    <ligand>
        <name>[4Fe-4S] cluster</name>
        <dbReference type="ChEBI" id="CHEBI:49883"/>
    </ligand>
</feature>
<feature type="binding site" evidence="1">
    <location>
        <position position="220"/>
    </location>
    <ligand>
        <name>[4Fe-4S] cluster</name>
        <dbReference type="ChEBI" id="CHEBI:49883"/>
    </ligand>
</feature>
<organism>
    <name type="scientific">Aedes aegypti</name>
    <name type="common">Yellowfever mosquito</name>
    <name type="synonym">Culex aegypti</name>
    <dbReference type="NCBI Taxonomy" id="7159"/>
    <lineage>
        <taxon>Eukaryota</taxon>
        <taxon>Metazoa</taxon>
        <taxon>Ecdysozoa</taxon>
        <taxon>Arthropoda</taxon>
        <taxon>Hexapoda</taxon>
        <taxon>Insecta</taxon>
        <taxon>Pterygota</taxon>
        <taxon>Neoptera</taxon>
        <taxon>Endopterygota</taxon>
        <taxon>Diptera</taxon>
        <taxon>Nematocera</taxon>
        <taxon>Culicoidea</taxon>
        <taxon>Culicidae</taxon>
        <taxon>Culicinae</taxon>
        <taxon>Aedini</taxon>
        <taxon>Aedes</taxon>
        <taxon>Stegomyia</taxon>
    </lineage>
</organism>
<reference key="1">
    <citation type="journal article" date="2007" name="Science">
        <title>Genome sequence of Aedes aegypti, a major arbovirus vector.</title>
        <authorList>
            <person name="Nene V."/>
            <person name="Wortman J.R."/>
            <person name="Lawson D."/>
            <person name="Haas B.J."/>
            <person name="Kodira C.D."/>
            <person name="Tu Z.J."/>
            <person name="Loftus B.J."/>
            <person name="Xi Z."/>
            <person name="Megy K."/>
            <person name="Grabherr M."/>
            <person name="Ren Q."/>
            <person name="Zdobnov E.M."/>
            <person name="Lobo N.F."/>
            <person name="Campbell K.S."/>
            <person name="Brown S.E."/>
            <person name="Bonaldo M.F."/>
            <person name="Zhu J."/>
            <person name="Sinkins S.P."/>
            <person name="Hogenkamp D.G."/>
            <person name="Amedeo P."/>
            <person name="Arensburger P."/>
            <person name="Atkinson P.W."/>
            <person name="Bidwell S.L."/>
            <person name="Biedler J."/>
            <person name="Birney E."/>
            <person name="Bruggner R.V."/>
            <person name="Costas J."/>
            <person name="Coy M.R."/>
            <person name="Crabtree J."/>
            <person name="Crawford M."/>
            <person name="DeBruyn B."/>
            <person name="DeCaprio D."/>
            <person name="Eiglmeier K."/>
            <person name="Eisenstadt E."/>
            <person name="El-Dorry H."/>
            <person name="Gelbart W.M."/>
            <person name="Gomes S.L."/>
            <person name="Hammond M."/>
            <person name="Hannick L.I."/>
            <person name="Hogan J.R."/>
            <person name="Holmes M.H."/>
            <person name="Jaffe D."/>
            <person name="Johnston S.J."/>
            <person name="Kennedy R.C."/>
            <person name="Koo H."/>
            <person name="Kravitz S."/>
            <person name="Kriventseva E.V."/>
            <person name="Kulp D."/>
            <person name="Labutti K."/>
            <person name="Lee E."/>
            <person name="Li S."/>
            <person name="Lovin D.D."/>
            <person name="Mao C."/>
            <person name="Mauceli E."/>
            <person name="Menck C.F."/>
            <person name="Miller J.R."/>
            <person name="Montgomery P."/>
            <person name="Mori A."/>
            <person name="Nascimento A.L."/>
            <person name="Naveira H.F."/>
            <person name="Nusbaum C."/>
            <person name="O'Leary S.B."/>
            <person name="Orvis J."/>
            <person name="Pertea M."/>
            <person name="Quesneville H."/>
            <person name="Reidenbach K.R."/>
            <person name="Rogers Y.-H.C."/>
            <person name="Roth C.W."/>
            <person name="Schneider J.R."/>
            <person name="Schatz M."/>
            <person name="Shumway M."/>
            <person name="Stanke M."/>
            <person name="Stinson E.O."/>
            <person name="Tubio J.M.C."/>
            <person name="Vanzee J.P."/>
            <person name="Verjovski-Almeida S."/>
            <person name="Werner D."/>
            <person name="White O.R."/>
            <person name="Wyder S."/>
            <person name="Zeng Q."/>
            <person name="Zhao Q."/>
            <person name="Zhao Y."/>
            <person name="Hill C.A."/>
            <person name="Raikhel A.S."/>
            <person name="Soares M.B."/>
            <person name="Knudson D.L."/>
            <person name="Lee N.H."/>
            <person name="Galagan J."/>
            <person name="Salzberg S.L."/>
            <person name="Paulsen I.T."/>
            <person name="Dimopoulos G."/>
            <person name="Collins F.H."/>
            <person name="Bruce B."/>
            <person name="Fraser-Liggett C.M."/>
            <person name="Severson D.W."/>
        </authorList>
    </citation>
    <scope>NUCLEOTIDE SEQUENCE [LARGE SCALE GENOMIC DNA]</scope>
    <source>
        <strain>LVPib12</strain>
    </source>
</reference>
<proteinExistence type="inferred from homology"/>
<dbReference type="EC" id="5.6.2.-" evidence="1"/>
<dbReference type="EMBL" id="CH477545">
    <property type="protein sequence ID" value="EAT39227.1"/>
    <property type="molecule type" value="Genomic_DNA"/>
</dbReference>
<dbReference type="RefSeq" id="XP_001653621.1">
    <property type="nucleotide sequence ID" value="XM_001653571.1"/>
</dbReference>
<dbReference type="SMR" id="Q16X92"/>
<dbReference type="FunCoup" id="Q16X92">
    <property type="interactions" value="1765"/>
</dbReference>
<dbReference type="STRING" id="7159.Q16X92"/>
<dbReference type="PaxDb" id="7159-AAEL008960-PA"/>
<dbReference type="GeneID" id="5571306"/>
<dbReference type="KEGG" id="aag:5571306"/>
<dbReference type="CTD" id="51750"/>
<dbReference type="VEuPathDB" id="VectorBase:AAEL008960"/>
<dbReference type="eggNOG" id="KOG1132">
    <property type="taxonomic scope" value="Eukaryota"/>
</dbReference>
<dbReference type="HOGENOM" id="CLU_006515_4_0_1"/>
<dbReference type="InParanoid" id="Q16X92"/>
<dbReference type="OMA" id="NCATIVA"/>
<dbReference type="OrthoDB" id="19182at2759"/>
<dbReference type="PhylomeDB" id="Q16X92"/>
<dbReference type="Proteomes" id="UP000008820">
    <property type="component" value="Unassembled WGS sequence"/>
</dbReference>
<dbReference type="Proteomes" id="UP000682892">
    <property type="component" value="Unassembled WGS sequence"/>
</dbReference>
<dbReference type="GO" id="GO:0005634">
    <property type="term" value="C:nucleus"/>
    <property type="evidence" value="ECO:0000250"/>
    <property type="project" value="UniProtKB"/>
</dbReference>
<dbReference type="GO" id="GO:0051539">
    <property type="term" value="F:4 iron, 4 sulfur cluster binding"/>
    <property type="evidence" value="ECO:0007669"/>
    <property type="project" value="UniProtKB-UniRule"/>
</dbReference>
<dbReference type="GO" id="GO:0005524">
    <property type="term" value="F:ATP binding"/>
    <property type="evidence" value="ECO:0000250"/>
    <property type="project" value="UniProtKB"/>
</dbReference>
<dbReference type="GO" id="GO:0016887">
    <property type="term" value="F:ATP hydrolysis activity"/>
    <property type="evidence" value="ECO:0007669"/>
    <property type="project" value="RHEA"/>
</dbReference>
<dbReference type="GO" id="GO:0003677">
    <property type="term" value="F:DNA binding"/>
    <property type="evidence" value="ECO:0007669"/>
    <property type="project" value="UniProtKB-UniRule"/>
</dbReference>
<dbReference type="GO" id="GO:0003678">
    <property type="term" value="F:DNA helicase activity"/>
    <property type="evidence" value="ECO:0000250"/>
    <property type="project" value="UniProtKB"/>
</dbReference>
<dbReference type="GO" id="GO:0070182">
    <property type="term" value="F:DNA polymerase binding"/>
    <property type="evidence" value="ECO:0007669"/>
    <property type="project" value="TreeGrafter"/>
</dbReference>
<dbReference type="GO" id="GO:0046872">
    <property type="term" value="F:metal ion binding"/>
    <property type="evidence" value="ECO:0007669"/>
    <property type="project" value="UniProtKB-UniRule"/>
</dbReference>
<dbReference type="GO" id="GO:0006310">
    <property type="term" value="P:DNA recombination"/>
    <property type="evidence" value="ECO:0007669"/>
    <property type="project" value="InterPro"/>
</dbReference>
<dbReference type="GO" id="GO:0006281">
    <property type="term" value="P:DNA repair"/>
    <property type="evidence" value="ECO:0007669"/>
    <property type="project" value="UniProtKB-UniRule"/>
</dbReference>
<dbReference type="GO" id="GO:0006260">
    <property type="term" value="P:DNA replication"/>
    <property type="evidence" value="ECO:0007669"/>
    <property type="project" value="InterPro"/>
</dbReference>
<dbReference type="GO" id="GO:0045910">
    <property type="term" value="P:negative regulation of DNA recombination"/>
    <property type="evidence" value="ECO:0007669"/>
    <property type="project" value="TreeGrafter"/>
</dbReference>
<dbReference type="GO" id="GO:1904430">
    <property type="term" value="P:negative regulation of t-circle formation"/>
    <property type="evidence" value="ECO:0007669"/>
    <property type="project" value="TreeGrafter"/>
</dbReference>
<dbReference type="GO" id="GO:0010569">
    <property type="term" value="P:regulation of double-strand break repair via homologous recombination"/>
    <property type="evidence" value="ECO:0000250"/>
    <property type="project" value="UniProtKB"/>
</dbReference>
<dbReference type="GO" id="GO:0090657">
    <property type="term" value="P:telomeric loop disassembly"/>
    <property type="evidence" value="ECO:0007669"/>
    <property type="project" value="TreeGrafter"/>
</dbReference>
<dbReference type="CDD" id="cd18788">
    <property type="entry name" value="SF2_C_XPD"/>
    <property type="match status" value="1"/>
</dbReference>
<dbReference type="FunFam" id="3.40.50.300:FF:000431">
    <property type="entry name" value="Regulator of telomere elongation helicase 1"/>
    <property type="match status" value="1"/>
</dbReference>
<dbReference type="Gene3D" id="1.20.1160.20">
    <property type="match status" value="1"/>
</dbReference>
<dbReference type="Gene3D" id="3.40.50.300">
    <property type="entry name" value="P-loop containing nucleotide triphosphate hydrolases"/>
    <property type="match status" value="2"/>
</dbReference>
<dbReference type="HAMAP" id="MF_03065">
    <property type="entry name" value="RTEL1"/>
    <property type="match status" value="1"/>
</dbReference>
<dbReference type="InterPro" id="IPR006555">
    <property type="entry name" value="ATP-dep_Helicase_C"/>
</dbReference>
<dbReference type="InterPro" id="IPR045028">
    <property type="entry name" value="DinG/Rad3-like"/>
</dbReference>
<dbReference type="InterPro" id="IPR014013">
    <property type="entry name" value="Helic_SF1/SF2_ATP-bd_DinG/Rad3"/>
</dbReference>
<dbReference type="InterPro" id="IPR006554">
    <property type="entry name" value="Helicase-like_DEXD_c2"/>
</dbReference>
<dbReference type="InterPro" id="IPR027417">
    <property type="entry name" value="P-loop_NTPase"/>
</dbReference>
<dbReference type="InterPro" id="IPR010614">
    <property type="entry name" value="RAD3-like_helicase_DEAD"/>
</dbReference>
<dbReference type="InterPro" id="IPR013020">
    <property type="entry name" value="Rad3/Chl1-like"/>
</dbReference>
<dbReference type="InterPro" id="IPR030845">
    <property type="entry name" value="RTEL1"/>
</dbReference>
<dbReference type="NCBIfam" id="TIGR00604">
    <property type="entry name" value="rad3"/>
    <property type="match status" value="1"/>
</dbReference>
<dbReference type="PANTHER" id="PTHR11472">
    <property type="entry name" value="DNA REPAIR DEAD HELICASE RAD3/XP-D SUBFAMILY MEMBER"/>
    <property type="match status" value="1"/>
</dbReference>
<dbReference type="PANTHER" id="PTHR11472:SF34">
    <property type="entry name" value="REGULATOR OF TELOMERE ELONGATION HELICASE 1"/>
    <property type="match status" value="1"/>
</dbReference>
<dbReference type="Pfam" id="PF23109">
    <property type="entry name" value="ARCH_RTEL1"/>
    <property type="match status" value="1"/>
</dbReference>
<dbReference type="Pfam" id="PF06733">
    <property type="entry name" value="DEAD_2"/>
    <property type="match status" value="1"/>
</dbReference>
<dbReference type="Pfam" id="PF13307">
    <property type="entry name" value="Helicase_C_2"/>
    <property type="match status" value="1"/>
</dbReference>
<dbReference type="SMART" id="SM00488">
    <property type="entry name" value="DEXDc2"/>
    <property type="match status" value="1"/>
</dbReference>
<dbReference type="SMART" id="SM00491">
    <property type="entry name" value="HELICc2"/>
    <property type="match status" value="1"/>
</dbReference>
<dbReference type="SUPFAM" id="SSF52540">
    <property type="entry name" value="P-loop containing nucleoside triphosphate hydrolases"/>
    <property type="match status" value="1"/>
</dbReference>
<dbReference type="PROSITE" id="PS51193">
    <property type="entry name" value="HELICASE_ATP_BIND_2"/>
    <property type="match status" value="1"/>
</dbReference>
<sequence>MPEYQINGITVNFPFEPYQVQRDYMSRVIECLQNSTNGVLESPTGTGKTLSLLCSSLAWVLHKKAQVQANMRTNITDLKEFEMVQRKKLGGDGGSGMEELLDKLHDGCGPEGAKWGVPKIVYASRTHSQLTQVMQEMKNTSYSFMKGVILGSRDQLCIHPEVSKEEGNSTKTNLCKAKVQSRTCSFYSRVESCKERPEVVSNVIMDIEDLVKVGTKVRACPFFLSKELIESADILFMPYNYLLDPKARKANNLEISNTIIILDEAHNVEKMCEESASMQIRSTDIALCIDDVTSIMKVMDHSVAIPEDDETKKDFTIDDLALLKEMLLQLEKTVDSIPVMFSQGGNTFPGTYIFEIFEKANIKEGNYHIIAQLLENIIQYIATITEKNNFVRRGGGLQILAEALSIIFAGSGPEYRASIDKCYKVHIEIEEQKKTRGNVKQADGWTATKQLVPSVKANAKVVSFWCFNPGFGMRQLLGRNARSIILTSGTLAPLKPLISELDIPIAVRLENPHIIDGSQVCVKIVGQGPDKESLNSSYGNRDNPKYISSLGRTILSFCPIIPGGLLVFFPSYPLLNKCQEAWQETGIWAQISRTKPIFVEPRGKDQFLNTMSEYYQKINDPDGKGAVFMAVCRGKVSEGLDFADMNGRAVIITGLPFPPLKDARVILKKKYLQEVRTRENEIISGDEWYSLEAARAVNQAIGRVIRHKNDYGAILLCDNRFHNHRQKSQLSSWIQKHLNTNQHQNFGPIIGELSRFFRNAEKILPQSKLSRNIVTLVQEPTPLIECNIPGALIVNRDTKRKLDDIRNNFVQIENSNQVTSTFRISDYEQAPSQSASNEPKNFLSRLNTQVHSIDFNDMTTYSMPSSSQGALVGIHKRERSTGSDNSIFSQTQTATQKKRKVVLIPQQVINLTSDDEDPGRTGDDPTRQAPEDRVELIKVIKTSIPLAKYQAFLSTLTNYNKDRNFDRLMEGLLVAFDRPELYYLLRAMRRFVKGDHEARFDAKIKEVCGR</sequence>
<accession>Q16X92</accession>
<evidence type="ECO:0000255" key="1">
    <source>
        <dbReference type="HAMAP-Rule" id="MF_03065"/>
    </source>
</evidence>
<evidence type="ECO:0000256" key="2">
    <source>
        <dbReference type="SAM" id="MobiDB-lite"/>
    </source>
</evidence>
<name>RTEL1_AEDAE</name>
<keyword id="KW-0004">4Fe-4S</keyword>
<keyword id="KW-0067">ATP-binding</keyword>
<keyword id="KW-0227">DNA damage</keyword>
<keyword id="KW-0234">DNA repair</keyword>
<keyword id="KW-0238">DNA-binding</keyword>
<keyword id="KW-0347">Helicase</keyword>
<keyword id="KW-0378">Hydrolase</keyword>
<keyword id="KW-0408">Iron</keyword>
<keyword id="KW-0411">Iron-sulfur</keyword>
<keyword id="KW-0413">Isomerase</keyword>
<keyword id="KW-0479">Metal-binding</keyword>
<keyword id="KW-0547">Nucleotide-binding</keyword>
<keyword id="KW-0539">Nucleus</keyword>
<keyword id="KW-1185">Reference proteome</keyword>
<protein>
    <recommendedName>
        <fullName evidence="1">Regulator of telomere elongation helicase 1 homolog</fullName>
        <ecNumber evidence="1">5.6.2.-</ecNumber>
    </recommendedName>
</protein>
<gene>
    <name type="ORF">AAEL008960</name>
</gene>